<keyword id="KW-0131">Cell cycle</keyword>
<keyword id="KW-0132">Cell division</keyword>
<keyword id="KW-0143">Chaperone</keyword>
<keyword id="KW-0963">Cytoplasm</keyword>
<keyword id="KW-0413">Isomerase</keyword>
<keyword id="KW-0697">Rotamase</keyword>
<accession>B4TMC5</accession>
<gene>
    <name evidence="1" type="primary">tig</name>
    <name type="ordered locus">SeSA_A0506</name>
</gene>
<dbReference type="EC" id="5.2.1.8" evidence="1"/>
<dbReference type="EMBL" id="CP001127">
    <property type="protein sequence ID" value="ACF92438.1"/>
    <property type="molecule type" value="Genomic_DNA"/>
</dbReference>
<dbReference type="RefSeq" id="WP_001198403.1">
    <property type="nucleotide sequence ID" value="NC_011094.1"/>
</dbReference>
<dbReference type="SMR" id="B4TMC5"/>
<dbReference type="KEGG" id="sew:SeSA_A0506"/>
<dbReference type="HOGENOM" id="CLU_033058_2_0_6"/>
<dbReference type="Proteomes" id="UP000001865">
    <property type="component" value="Chromosome"/>
</dbReference>
<dbReference type="GO" id="GO:0005737">
    <property type="term" value="C:cytoplasm"/>
    <property type="evidence" value="ECO:0007669"/>
    <property type="project" value="UniProtKB-SubCell"/>
</dbReference>
<dbReference type="GO" id="GO:0003755">
    <property type="term" value="F:peptidyl-prolyl cis-trans isomerase activity"/>
    <property type="evidence" value="ECO:0007669"/>
    <property type="project" value="UniProtKB-UniRule"/>
</dbReference>
<dbReference type="GO" id="GO:0044183">
    <property type="term" value="F:protein folding chaperone"/>
    <property type="evidence" value="ECO:0007669"/>
    <property type="project" value="TreeGrafter"/>
</dbReference>
<dbReference type="GO" id="GO:0043022">
    <property type="term" value="F:ribosome binding"/>
    <property type="evidence" value="ECO:0007669"/>
    <property type="project" value="TreeGrafter"/>
</dbReference>
<dbReference type="GO" id="GO:0051083">
    <property type="term" value="P:'de novo' cotranslational protein folding"/>
    <property type="evidence" value="ECO:0007669"/>
    <property type="project" value="TreeGrafter"/>
</dbReference>
<dbReference type="GO" id="GO:0051301">
    <property type="term" value="P:cell division"/>
    <property type="evidence" value="ECO:0007669"/>
    <property type="project" value="UniProtKB-KW"/>
</dbReference>
<dbReference type="GO" id="GO:0061077">
    <property type="term" value="P:chaperone-mediated protein folding"/>
    <property type="evidence" value="ECO:0007669"/>
    <property type="project" value="TreeGrafter"/>
</dbReference>
<dbReference type="GO" id="GO:0015031">
    <property type="term" value="P:protein transport"/>
    <property type="evidence" value="ECO:0007669"/>
    <property type="project" value="UniProtKB-UniRule"/>
</dbReference>
<dbReference type="GO" id="GO:0043335">
    <property type="term" value="P:protein unfolding"/>
    <property type="evidence" value="ECO:0007669"/>
    <property type="project" value="TreeGrafter"/>
</dbReference>
<dbReference type="FunFam" id="1.10.3120.10:FF:000001">
    <property type="entry name" value="Trigger factor"/>
    <property type="match status" value="1"/>
</dbReference>
<dbReference type="FunFam" id="3.10.50.40:FF:000001">
    <property type="entry name" value="Trigger factor"/>
    <property type="match status" value="1"/>
</dbReference>
<dbReference type="FunFam" id="3.30.70.1050:FF:000001">
    <property type="entry name" value="Trigger factor"/>
    <property type="match status" value="1"/>
</dbReference>
<dbReference type="Gene3D" id="3.10.50.40">
    <property type="match status" value="1"/>
</dbReference>
<dbReference type="Gene3D" id="3.30.70.1050">
    <property type="entry name" value="Trigger factor ribosome-binding domain"/>
    <property type="match status" value="1"/>
</dbReference>
<dbReference type="Gene3D" id="1.10.3120.10">
    <property type="entry name" value="Trigger factor, C-terminal domain"/>
    <property type="match status" value="1"/>
</dbReference>
<dbReference type="HAMAP" id="MF_00303">
    <property type="entry name" value="Trigger_factor_Tig"/>
    <property type="match status" value="1"/>
</dbReference>
<dbReference type="InterPro" id="IPR046357">
    <property type="entry name" value="PPIase_dom_sf"/>
</dbReference>
<dbReference type="InterPro" id="IPR001179">
    <property type="entry name" value="PPIase_FKBP_dom"/>
</dbReference>
<dbReference type="InterPro" id="IPR005215">
    <property type="entry name" value="Trig_fac"/>
</dbReference>
<dbReference type="InterPro" id="IPR008880">
    <property type="entry name" value="Trigger_fac_C"/>
</dbReference>
<dbReference type="InterPro" id="IPR037041">
    <property type="entry name" value="Trigger_fac_C_sf"/>
</dbReference>
<dbReference type="InterPro" id="IPR008881">
    <property type="entry name" value="Trigger_fac_ribosome-bd_bac"/>
</dbReference>
<dbReference type="InterPro" id="IPR036611">
    <property type="entry name" value="Trigger_fac_ribosome-bd_sf"/>
</dbReference>
<dbReference type="InterPro" id="IPR027304">
    <property type="entry name" value="Trigger_fact/SurA_dom_sf"/>
</dbReference>
<dbReference type="NCBIfam" id="TIGR00115">
    <property type="entry name" value="tig"/>
    <property type="match status" value="1"/>
</dbReference>
<dbReference type="PANTHER" id="PTHR30560">
    <property type="entry name" value="TRIGGER FACTOR CHAPERONE AND PEPTIDYL-PROLYL CIS/TRANS ISOMERASE"/>
    <property type="match status" value="1"/>
</dbReference>
<dbReference type="PANTHER" id="PTHR30560:SF3">
    <property type="entry name" value="TRIGGER FACTOR-LIKE PROTEIN TIG, CHLOROPLASTIC"/>
    <property type="match status" value="1"/>
</dbReference>
<dbReference type="Pfam" id="PF00254">
    <property type="entry name" value="FKBP_C"/>
    <property type="match status" value="1"/>
</dbReference>
<dbReference type="Pfam" id="PF05698">
    <property type="entry name" value="Trigger_C"/>
    <property type="match status" value="1"/>
</dbReference>
<dbReference type="Pfam" id="PF05697">
    <property type="entry name" value="Trigger_N"/>
    <property type="match status" value="1"/>
</dbReference>
<dbReference type="PIRSF" id="PIRSF003095">
    <property type="entry name" value="Trigger_factor"/>
    <property type="match status" value="1"/>
</dbReference>
<dbReference type="SUPFAM" id="SSF54534">
    <property type="entry name" value="FKBP-like"/>
    <property type="match status" value="1"/>
</dbReference>
<dbReference type="SUPFAM" id="SSF109998">
    <property type="entry name" value="Triger factor/SurA peptide-binding domain-like"/>
    <property type="match status" value="1"/>
</dbReference>
<dbReference type="SUPFAM" id="SSF102735">
    <property type="entry name" value="Trigger factor ribosome-binding domain"/>
    <property type="match status" value="1"/>
</dbReference>
<dbReference type="PROSITE" id="PS50059">
    <property type="entry name" value="FKBP_PPIASE"/>
    <property type="match status" value="1"/>
</dbReference>
<organism>
    <name type="scientific">Salmonella schwarzengrund (strain CVM19633)</name>
    <dbReference type="NCBI Taxonomy" id="439843"/>
    <lineage>
        <taxon>Bacteria</taxon>
        <taxon>Pseudomonadati</taxon>
        <taxon>Pseudomonadota</taxon>
        <taxon>Gammaproteobacteria</taxon>
        <taxon>Enterobacterales</taxon>
        <taxon>Enterobacteriaceae</taxon>
        <taxon>Salmonella</taxon>
    </lineage>
</organism>
<protein>
    <recommendedName>
        <fullName evidence="1">Trigger factor</fullName>
        <shortName evidence="1">TF</shortName>
        <ecNumber evidence="1">5.2.1.8</ecNumber>
    </recommendedName>
    <alternativeName>
        <fullName evidence="1">PPIase</fullName>
    </alternativeName>
</protein>
<evidence type="ECO:0000255" key="1">
    <source>
        <dbReference type="HAMAP-Rule" id="MF_00303"/>
    </source>
</evidence>
<sequence length="432" mass="48050">MQVSVETTQGLGRRVTITIAADSIETAVKSELVNVAKKVRIDGFRKGKVPMNIVAQRYGASVRQDVLGDLMSRNFVDAIIKEKINPAGAPNYVPGEYKVGEDFTYSVEFEVYPEVELTGLESIEVEKPVVEVTDADVDVMLDTLRKQQATWKEKDGAADAEDRVTIDFTGSVDGEEFEGGKATDFVLAMGQGRMIPGFEDGVKGHKAGEEFTIDVTFPEEYHAENLKGKAAKFVINLKKVEERELPELTEEFIKRFGVEDGSVAGLRAEVRKNMERELKGAVRNRVKSQAIEGLVKANDIDVPAALIDSEIDVLRRQAAQRFGGNEKQALELPRELFEEQAKRRVVVGLLLGEVIRTNELKADEERVKGLIEEMASAYEDPKEVIEFYSKNKELMDNMRNVALEEQAVEAVLAKAKVSEKATSFNELMNQQA</sequence>
<reference key="1">
    <citation type="journal article" date="2011" name="J. Bacteriol.">
        <title>Comparative genomics of 28 Salmonella enterica isolates: evidence for CRISPR-mediated adaptive sublineage evolution.</title>
        <authorList>
            <person name="Fricke W.F."/>
            <person name="Mammel M.K."/>
            <person name="McDermott P.F."/>
            <person name="Tartera C."/>
            <person name="White D.G."/>
            <person name="Leclerc J.E."/>
            <person name="Ravel J."/>
            <person name="Cebula T.A."/>
        </authorList>
    </citation>
    <scope>NUCLEOTIDE SEQUENCE [LARGE SCALE GENOMIC DNA]</scope>
    <source>
        <strain>CVM19633</strain>
    </source>
</reference>
<comment type="function">
    <text evidence="1">Involved in protein export. Acts as a chaperone by maintaining the newly synthesized protein in an open conformation. Functions as a peptidyl-prolyl cis-trans isomerase.</text>
</comment>
<comment type="catalytic activity">
    <reaction evidence="1">
        <text>[protein]-peptidylproline (omega=180) = [protein]-peptidylproline (omega=0)</text>
        <dbReference type="Rhea" id="RHEA:16237"/>
        <dbReference type="Rhea" id="RHEA-COMP:10747"/>
        <dbReference type="Rhea" id="RHEA-COMP:10748"/>
        <dbReference type="ChEBI" id="CHEBI:83833"/>
        <dbReference type="ChEBI" id="CHEBI:83834"/>
        <dbReference type="EC" id="5.2.1.8"/>
    </reaction>
</comment>
<comment type="subcellular location">
    <subcellularLocation>
        <location>Cytoplasm</location>
    </subcellularLocation>
    <text evidence="1">About half TF is bound to the ribosome near the polypeptide exit tunnel while the other half is free in the cytoplasm.</text>
</comment>
<comment type="domain">
    <text evidence="1">Consists of 3 domains; the N-terminus binds the ribosome, the middle domain has PPIase activity, while the C-terminus has intrinsic chaperone activity on its own.</text>
</comment>
<comment type="similarity">
    <text evidence="1">Belongs to the FKBP-type PPIase family. Tig subfamily.</text>
</comment>
<feature type="chain" id="PRO_1000115580" description="Trigger factor">
    <location>
        <begin position="1"/>
        <end position="432"/>
    </location>
</feature>
<feature type="domain" description="PPIase FKBP-type" evidence="1">
    <location>
        <begin position="161"/>
        <end position="246"/>
    </location>
</feature>
<proteinExistence type="inferred from homology"/>
<name>TIG_SALSV</name>